<protein>
    <recommendedName>
        <fullName evidence="1">Probable potassium transport system protein Kup 2</fullName>
    </recommendedName>
</protein>
<comment type="function">
    <text evidence="1">Transport of potassium into the cell. Likely operates as a K(+):H(+) symporter.</text>
</comment>
<comment type="catalytic activity">
    <reaction evidence="1">
        <text>K(+)(in) + H(+)(in) = K(+)(out) + H(+)(out)</text>
        <dbReference type="Rhea" id="RHEA:28490"/>
        <dbReference type="ChEBI" id="CHEBI:15378"/>
        <dbReference type="ChEBI" id="CHEBI:29103"/>
    </reaction>
    <physiologicalReaction direction="right-to-left" evidence="1">
        <dbReference type="Rhea" id="RHEA:28492"/>
    </physiologicalReaction>
</comment>
<comment type="subcellular location">
    <subcellularLocation>
        <location evidence="1">Cell inner membrane</location>
        <topology evidence="1">Multi-pass membrane protein</topology>
    </subcellularLocation>
</comment>
<comment type="similarity">
    <text evidence="1">Belongs to the HAK/KUP transporter (TC 2.A.72) family.</text>
</comment>
<name>KUP2_LEGPL</name>
<gene>
    <name evidence="1" type="primary">kup2</name>
    <name type="ordered locus">lpl2054</name>
</gene>
<organism>
    <name type="scientific">Legionella pneumophila (strain Lens)</name>
    <dbReference type="NCBI Taxonomy" id="297245"/>
    <lineage>
        <taxon>Bacteria</taxon>
        <taxon>Pseudomonadati</taxon>
        <taxon>Pseudomonadota</taxon>
        <taxon>Gammaproteobacteria</taxon>
        <taxon>Legionellales</taxon>
        <taxon>Legionellaceae</taxon>
        <taxon>Legionella</taxon>
    </lineage>
</organism>
<accession>Q5WUW3</accession>
<evidence type="ECO:0000255" key="1">
    <source>
        <dbReference type="HAMAP-Rule" id="MF_01522"/>
    </source>
</evidence>
<proteinExistence type="inferred from homology"/>
<keyword id="KW-0997">Cell inner membrane</keyword>
<keyword id="KW-1003">Cell membrane</keyword>
<keyword id="KW-0406">Ion transport</keyword>
<keyword id="KW-0472">Membrane</keyword>
<keyword id="KW-0630">Potassium</keyword>
<keyword id="KW-0633">Potassium transport</keyword>
<keyword id="KW-0769">Symport</keyword>
<keyword id="KW-0812">Transmembrane</keyword>
<keyword id="KW-1133">Transmembrane helix</keyword>
<keyword id="KW-0813">Transport</keyword>
<sequence length="624" mass="70766">MNESLTEKRNELSLSFAALGVVFGDIGTSPLYAFGQVIKYFPINDYNIYGILSLIFWSLIIIVSIKYLVIVFRADNDGEGGIIALAGVIRQKIKKPGGWLLFITLVGIGLIIGDGMLTPAISILSAVEGLESLSPNLAKYVLPVTLIILFFLFKMQSIGTGKIGVYFAPVMLVWFITIGILGFLQIIQNPKVLMAINPYYAINFFMIHQYSALFILGGVFLVMTGGEALFADLGHFGKKAIRTGWFAVALPALLLCYFGQGAFVLMHTEDIKYPFFSLSPDWFLPVMIILATLATIIASQAIISAAFSILKQASLLNLIPRLKIVFTSKFEKGEVYLPLINFILALGTCSLVVIFKSSSNLADAYGIAVNLDMLITTVLVGIIAYRCWSWHAFKILIFLLILIIELAFFAGNIPKLLTGGWIPVLIAFLGFVVMYTWHCGFEKLRELHHRDALMDAFIIDELNQNKISRQPGMGLYIIDPYDYEGESLLHHLRLNRIFFENMVFVSIKIENKPYIPIEDKFELIKKAEGFYLIFIHYGFTENINLPNELDEMFKRVYLPFDIIKNKLIYFIEIVFVEMTGERQKHMYLWQKHFFSLMIRNAVPDIQFYQLPYNNTIAIGTYYQF</sequence>
<dbReference type="EMBL" id="CR628337">
    <property type="protein sequence ID" value="CAH16294.1"/>
    <property type="molecule type" value="Genomic_DNA"/>
</dbReference>
<dbReference type="RefSeq" id="WP_011216034.1">
    <property type="nucleotide sequence ID" value="NC_006369.1"/>
</dbReference>
<dbReference type="KEGG" id="lpf:lpl2054"/>
<dbReference type="LegioList" id="lpl2054"/>
<dbReference type="HOGENOM" id="CLU_008142_4_2_6"/>
<dbReference type="Proteomes" id="UP000002517">
    <property type="component" value="Chromosome"/>
</dbReference>
<dbReference type="GO" id="GO:0005886">
    <property type="term" value="C:plasma membrane"/>
    <property type="evidence" value="ECO:0007669"/>
    <property type="project" value="UniProtKB-SubCell"/>
</dbReference>
<dbReference type="GO" id="GO:0015079">
    <property type="term" value="F:potassium ion transmembrane transporter activity"/>
    <property type="evidence" value="ECO:0007669"/>
    <property type="project" value="UniProtKB-UniRule"/>
</dbReference>
<dbReference type="GO" id="GO:0015293">
    <property type="term" value="F:symporter activity"/>
    <property type="evidence" value="ECO:0007669"/>
    <property type="project" value="UniProtKB-UniRule"/>
</dbReference>
<dbReference type="HAMAP" id="MF_01522">
    <property type="entry name" value="Kup"/>
    <property type="match status" value="1"/>
</dbReference>
<dbReference type="InterPro" id="IPR003855">
    <property type="entry name" value="K+_transporter"/>
</dbReference>
<dbReference type="InterPro" id="IPR053952">
    <property type="entry name" value="K_trans_C"/>
</dbReference>
<dbReference type="InterPro" id="IPR053951">
    <property type="entry name" value="K_trans_N"/>
</dbReference>
<dbReference type="InterPro" id="IPR023051">
    <property type="entry name" value="Kup"/>
</dbReference>
<dbReference type="PANTHER" id="PTHR30540:SF79">
    <property type="entry name" value="LOW AFFINITY POTASSIUM TRANSPORT SYSTEM PROTEIN KUP"/>
    <property type="match status" value="1"/>
</dbReference>
<dbReference type="PANTHER" id="PTHR30540">
    <property type="entry name" value="OSMOTIC STRESS POTASSIUM TRANSPORTER"/>
    <property type="match status" value="1"/>
</dbReference>
<dbReference type="Pfam" id="PF02705">
    <property type="entry name" value="K_trans"/>
    <property type="match status" value="1"/>
</dbReference>
<dbReference type="Pfam" id="PF22776">
    <property type="entry name" value="K_trans_C"/>
    <property type="match status" value="1"/>
</dbReference>
<feature type="chain" id="PRO_0000209036" description="Probable potassium transport system protein Kup 2">
    <location>
        <begin position="1"/>
        <end position="624"/>
    </location>
</feature>
<feature type="transmembrane region" description="Helical" evidence="1">
    <location>
        <begin position="14"/>
        <end position="34"/>
    </location>
</feature>
<feature type="transmembrane region" description="Helical" evidence="1">
    <location>
        <begin position="51"/>
        <end position="71"/>
    </location>
</feature>
<feature type="transmembrane region" description="Helical" evidence="1">
    <location>
        <begin position="97"/>
        <end position="117"/>
    </location>
</feature>
<feature type="transmembrane region" description="Helical" evidence="1">
    <location>
        <begin position="133"/>
        <end position="153"/>
    </location>
</feature>
<feature type="transmembrane region" description="Helical" evidence="1">
    <location>
        <begin position="163"/>
        <end position="183"/>
    </location>
</feature>
<feature type="transmembrane region" description="Helical" evidence="1">
    <location>
        <begin position="211"/>
        <end position="231"/>
    </location>
</feature>
<feature type="transmembrane region" description="Helical" evidence="1">
    <location>
        <begin position="245"/>
        <end position="265"/>
    </location>
</feature>
<feature type="transmembrane region" description="Helical" evidence="1">
    <location>
        <begin position="283"/>
        <end position="303"/>
    </location>
</feature>
<feature type="transmembrane region" description="Helical" evidence="1">
    <location>
        <begin position="335"/>
        <end position="355"/>
    </location>
</feature>
<feature type="transmembrane region" description="Helical" evidence="1">
    <location>
        <begin position="364"/>
        <end position="384"/>
    </location>
</feature>
<feature type="transmembrane region" description="Helical" evidence="1">
    <location>
        <begin position="393"/>
        <end position="413"/>
    </location>
</feature>
<feature type="transmembrane region" description="Helical" evidence="1">
    <location>
        <begin position="416"/>
        <end position="436"/>
    </location>
</feature>
<reference key="1">
    <citation type="journal article" date="2004" name="Nat. Genet.">
        <title>Evidence in the Legionella pneumophila genome for exploitation of host cell functions and high genome plasticity.</title>
        <authorList>
            <person name="Cazalet C."/>
            <person name="Rusniok C."/>
            <person name="Brueggemann H."/>
            <person name="Zidane N."/>
            <person name="Magnier A."/>
            <person name="Ma L."/>
            <person name="Tichit M."/>
            <person name="Jarraud S."/>
            <person name="Bouchier C."/>
            <person name="Vandenesch F."/>
            <person name="Kunst F."/>
            <person name="Etienne J."/>
            <person name="Glaser P."/>
            <person name="Buchrieser C."/>
        </authorList>
    </citation>
    <scope>NUCLEOTIDE SEQUENCE [LARGE SCALE GENOMIC DNA]</scope>
    <source>
        <strain>Lens</strain>
    </source>
</reference>